<evidence type="ECO:0000255" key="1">
    <source>
        <dbReference type="HAMAP-Rule" id="MF_01010"/>
    </source>
</evidence>
<feature type="chain" id="PRO_0000161910" description="23S rRNA (uracil(1939)-C(5))-methyltransferase RlmD">
    <location>
        <begin position="1"/>
        <end position="450"/>
    </location>
</feature>
<feature type="domain" description="TRAM" evidence="1">
    <location>
        <begin position="1"/>
        <end position="62"/>
    </location>
</feature>
<feature type="active site" description="Nucleophile" evidence="1">
    <location>
        <position position="406"/>
    </location>
</feature>
<feature type="binding site" evidence="1">
    <location>
        <position position="75"/>
    </location>
    <ligand>
        <name>[4Fe-4S] cluster</name>
        <dbReference type="ChEBI" id="CHEBI:49883"/>
    </ligand>
</feature>
<feature type="binding site" evidence="1">
    <location>
        <position position="81"/>
    </location>
    <ligand>
        <name>[4Fe-4S] cluster</name>
        <dbReference type="ChEBI" id="CHEBI:49883"/>
    </ligand>
</feature>
<feature type="binding site" evidence="1">
    <location>
        <position position="84"/>
    </location>
    <ligand>
        <name>[4Fe-4S] cluster</name>
        <dbReference type="ChEBI" id="CHEBI:49883"/>
    </ligand>
</feature>
<feature type="binding site" evidence="1">
    <location>
        <position position="163"/>
    </location>
    <ligand>
        <name>[4Fe-4S] cluster</name>
        <dbReference type="ChEBI" id="CHEBI:49883"/>
    </ligand>
</feature>
<feature type="binding site" evidence="1">
    <location>
        <position position="271"/>
    </location>
    <ligand>
        <name>S-adenosyl-L-methionine</name>
        <dbReference type="ChEBI" id="CHEBI:59789"/>
    </ligand>
</feature>
<feature type="binding site" evidence="1">
    <location>
        <position position="300"/>
    </location>
    <ligand>
        <name>S-adenosyl-L-methionine</name>
        <dbReference type="ChEBI" id="CHEBI:59789"/>
    </ligand>
</feature>
<feature type="binding site" evidence="1">
    <location>
        <position position="305"/>
    </location>
    <ligand>
        <name>S-adenosyl-L-methionine</name>
        <dbReference type="ChEBI" id="CHEBI:59789"/>
    </ligand>
</feature>
<feature type="binding site" evidence="1">
    <location>
        <position position="321"/>
    </location>
    <ligand>
        <name>S-adenosyl-L-methionine</name>
        <dbReference type="ChEBI" id="CHEBI:59789"/>
    </ligand>
</feature>
<feature type="binding site" evidence="1">
    <location>
        <position position="349"/>
    </location>
    <ligand>
        <name>S-adenosyl-L-methionine</name>
        <dbReference type="ChEBI" id="CHEBI:59789"/>
    </ligand>
</feature>
<feature type="binding site" evidence="1">
    <location>
        <position position="370"/>
    </location>
    <ligand>
        <name>S-adenosyl-L-methionine</name>
        <dbReference type="ChEBI" id="CHEBI:59789"/>
    </ligand>
</feature>
<accession>Q8Y035</accession>
<protein>
    <recommendedName>
        <fullName evidence="1">23S rRNA (uracil(1939)-C(5))-methyltransferase RlmD</fullName>
        <ecNumber evidence="1">2.1.1.190</ecNumber>
    </recommendedName>
    <alternativeName>
        <fullName evidence="1">23S rRNA(m5U1939)-methyltransferase</fullName>
    </alternativeName>
</protein>
<comment type="function">
    <text evidence="1">Catalyzes the formation of 5-methyl-uridine at position 1939 (m5U1939) in 23S rRNA.</text>
</comment>
<comment type="catalytic activity">
    <reaction evidence="1">
        <text>uridine(1939) in 23S rRNA + S-adenosyl-L-methionine = 5-methyluridine(1939) in 23S rRNA + S-adenosyl-L-homocysteine + H(+)</text>
        <dbReference type="Rhea" id="RHEA:42908"/>
        <dbReference type="Rhea" id="RHEA-COMP:10278"/>
        <dbReference type="Rhea" id="RHEA-COMP:10279"/>
        <dbReference type="ChEBI" id="CHEBI:15378"/>
        <dbReference type="ChEBI" id="CHEBI:57856"/>
        <dbReference type="ChEBI" id="CHEBI:59789"/>
        <dbReference type="ChEBI" id="CHEBI:65315"/>
        <dbReference type="ChEBI" id="CHEBI:74447"/>
        <dbReference type="EC" id="2.1.1.190"/>
    </reaction>
</comment>
<comment type="similarity">
    <text evidence="1">Belongs to the class I-like SAM-binding methyltransferase superfamily. RNA M5U methyltransferase family. RlmD subfamily.</text>
</comment>
<proteinExistence type="inferred from homology"/>
<dbReference type="EC" id="2.1.1.190" evidence="1"/>
<dbReference type="EMBL" id="AL646052">
    <property type="protein sequence ID" value="CAD14911.1"/>
    <property type="molecule type" value="Genomic_DNA"/>
</dbReference>
<dbReference type="RefSeq" id="WP_011001159.1">
    <property type="nucleotide sequence ID" value="NC_003295.1"/>
</dbReference>
<dbReference type="SMR" id="Q8Y035"/>
<dbReference type="STRING" id="267608.RSc1209"/>
<dbReference type="EnsemblBacteria" id="CAD14911">
    <property type="protein sequence ID" value="CAD14911"/>
    <property type="gene ID" value="RSc1209"/>
</dbReference>
<dbReference type="KEGG" id="rso:RSc1209"/>
<dbReference type="eggNOG" id="COG2265">
    <property type="taxonomic scope" value="Bacteria"/>
</dbReference>
<dbReference type="HOGENOM" id="CLU_014689_8_2_4"/>
<dbReference type="Proteomes" id="UP000001436">
    <property type="component" value="Chromosome"/>
</dbReference>
<dbReference type="GO" id="GO:0051539">
    <property type="term" value="F:4 iron, 4 sulfur cluster binding"/>
    <property type="evidence" value="ECO:0007669"/>
    <property type="project" value="UniProtKB-KW"/>
</dbReference>
<dbReference type="GO" id="GO:0005506">
    <property type="term" value="F:iron ion binding"/>
    <property type="evidence" value="ECO:0007669"/>
    <property type="project" value="UniProtKB-UniRule"/>
</dbReference>
<dbReference type="GO" id="GO:0003723">
    <property type="term" value="F:RNA binding"/>
    <property type="evidence" value="ECO:0007669"/>
    <property type="project" value="InterPro"/>
</dbReference>
<dbReference type="GO" id="GO:0070041">
    <property type="term" value="F:rRNA (uridine-C5-)-methyltransferase activity"/>
    <property type="evidence" value="ECO:0007669"/>
    <property type="project" value="UniProtKB-UniRule"/>
</dbReference>
<dbReference type="GO" id="GO:0070475">
    <property type="term" value="P:rRNA base methylation"/>
    <property type="evidence" value="ECO:0007669"/>
    <property type="project" value="TreeGrafter"/>
</dbReference>
<dbReference type="CDD" id="cd02440">
    <property type="entry name" value="AdoMet_MTases"/>
    <property type="match status" value="1"/>
</dbReference>
<dbReference type="Gene3D" id="2.40.50.1070">
    <property type="match status" value="1"/>
</dbReference>
<dbReference type="Gene3D" id="2.40.50.140">
    <property type="entry name" value="Nucleic acid-binding proteins"/>
    <property type="match status" value="1"/>
</dbReference>
<dbReference type="Gene3D" id="3.40.50.150">
    <property type="entry name" value="Vaccinia Virus protein VP39"/>
    <property type="match status" value="1"/>
</dbReference>
<dbReference type="HAMAP" id="MF_01010">
    <property type="entry name" value="23SrRNA_methyltr_RlmD"/>
    <property type="match status" value="1"/>
</dbReference>
<dbReference type="InterPro" id="IPR001566">
    <property type="entry name" value="23S_rRNA_MeTrfase_RlmD"/>
</dbReference>
<dbReference type="InterPro" id="IPR030391">
    <property type="entry name" value="MeTrfase_TrmA_CS"/>
</dbReference>
<dbReference type="InterPro" id="IPR012340">
    <property type="entry name" value="NA-bd_OB-fold"/>
</dbReference>
<dbReference type="InterPro" id="IPR029063">
    <property type="entry name" value="SAM-dependent_MTases_sf"/>
</dbReference>
<dbReference type="InterPro" id="IPR002792">
    <property type="entry name" value="TRAM_dom"/>
</dbReference>
<dbReference type="InterPro" id="IPR010280">
    <property type="entry name" value="U5_MeTrfase_fam"/>
</dbReference>
<dbReference type="NCBIfam" id="NF009639">
    <property type="entry name" value="PRK13168.1"/>
    <property type="match status" value="1"/>
</dbReference>
<dbReference type="PANTHER" id="PTHR11061:SF49">
    <property type="entry name" value="23S RRNA (URACIL(1939)-C(5))-METHYLTRANSFERASE RLMD"/>
    <property type="match status" value="1"/>
</dbReference>
<dbReference type="PANTHER" id="PTHR11061">
    <property type="entry name" value="RNA M5U METHYLTRANSFERASE"/>
    <property type="match status" value="1"/>
</dbReference>
<dbReference type="Pfam" id="PF01938">
    <property type="entry name" value="TRAM"/>
    <property type="match status" value="1"/>
</dbReference>
<dbReference type="Pfam" id="PF05958">
    <property type="entry name" value="tRNA_U5-meth_tr"/>
    <property type="match status" value="1"/>
</dbReference>
<dbReference type="SUPFAM" id="SSF50249">
    <property type="entry name" value="Nucleic acid-binding proteins"/>
    <property type="match status" value="1"/>
</dbReference>
<dbReference type="SUPFAM" id="SSF53335">
    <property type="entry name" value="S-adenosyl-L-methionine-dependent methyltransferases"/>
    <property type="match status" value="1"/>
</dbReference>
<dbReference type="PROSITE" id="PS51687">
    <property type="entry name" value="SAM_MT_RNA_M5U"/>
    <property type="match status" value="1"/>
</dbReference>
<dbReference type="PROSITE" id="PS50926">
    <property type="entry name" value="TRAM"/>
    <property type="match status" value="1"/>
</dbReference>
<dbReference type="PROSITE" id="PS01231">
    <property type="entry name" value="TRMA_2"/>
    <property type="match status" value="1"/>
</dbReference>
<name>RLMD_RALN1</name>
<sequence length="450" mass="49266">MPVAGPLEIVSLDNEARGVGRLSNEDGTPGKVVFVEGALPGERVTYRSHRAKPSYEQATLVDILRQSASRVTPQCRFFGTCGGCSMQHLDSRAQIAIKQRVLEDDLWHLAKLRPDVVFRPIAGPDWGYRYRARLTVRHVAAKGGVLVGFHERKSSYVADMTSCEVLPPHVSALLVPLRELVGRLSIVQRMPQIEVAVGQDVTALVLRILEPLTSADEAELRAFADRHAVQFWLQPKGPDTVYPFYPLDRALTYTLPEFGITMPFKPTDFTQVNHQINRVLMSRALKLLDARPGDRLLDLFCGIGNFTLPMATRGCEVMGIEGSEALTTRALANAQHNGLDGKTTFACRNLFEVSADDIAALGRFDRWLVDPPREGALAVSKAVAELSQRGGEAAALLPGRIVYVSCNPATLARDAGLLVHEAGYRLAGAGVVNMFPHTSHVESIAVFERA</sequence>
<keyword id="KW-0004">4Fe-4S</keyword>
<keyword id="KW-0408">Iron</keyword>
<keyword id="KW-0411">Iron-sulfur</keyword>
<keyword id="KW-0479">Metal-binding</keyword>
<keyword id="KW-0489">Methyltransferase</keyword>
<keyword id="KW-1185">Reference proteome</keyword>
<keyword id="KW-0698">rRNA processing</keyword>
<keyword id="KW-0949">S-adenosyl-L-methionine</keyword>
<keyword id="KW-0808">Transferase</keyword>
<gene>
    <name evidence="1" type="primary">rlmD</name>
    <name type="synonym">rumA</name>
    <name type="ordered locus">RSc1209</name>
    <name type="ORF">RS02696</name>
</gene>
<reference key="1">
    <citation type="journal article" date="2002" name="Nature">
        <title>Genome sequence of the plant pathogen Ralstonia solanacearum.</title>
        <authorList>
            <person name="Salanoubat M."/>
            <person name="Genin S."/>
            <person name="Artiguenave F."/>
            <person name="Gouzy J."/>
            <person name="Mangenot S."/>
            <person name="Arlat M."/>
            <person name="Billault A."/>
            <person name="Brottier P."/>
            <person name="Camus J.-C."/>
            <person name="Cattolico L."/>
            <person name="Chandler M."/>
            <person name="Choisne N."/>
            <person name="Claudel-Renard C."/>
            <person name="Cunnac S."/>
            <person name="Demange N."/>
            <person name="Gaspin C."/>
            <person name="Lavie M."/>
            <person name="Moisan A."/>
            <person name="Robert C."/>
            <person name="Saurin W."/>
            <person name="Schiex T."/>
            <person name="Siguier P."/>
            <person name="Thebault P."/>
            <person name="Whalen M."/>
            <person name="Wincker P."/>
            <person name="Levy M."/>
            <person name="Weissenbach J."/>
            <person name="Boucher C.A."/>
        </authorList>
    </citation>
    <scope>NUCLEOTIDE SEQUENCE [LARGE SCALE GENOMIC DNA]</scope>
    <source>
        <strain>ATCC BAA-1114 / GMI1000</strain>
    </source>
</reference>
<organism>
    <name type="scientific">Ralstonia nicotianae (strain ATCC BAA-1114 / GMI1000)</name>
    <name type="common">Ralstonia solanacearum</name>
    <dbReference type="NCBI Taxonomy" id="267608"/>
    <lineage>
        <taxon>Bacteria</taxon>
        <taxon>Pseudomonadati</taxon>
        <taxon>Pseudomonadota</taxon>
        <taxon>Betaproteobacteria</taxon>
        <taxon>Burkholderiales</taxon>
        <taxon>Burkholderiaceae</taxon>
        <taxon>Ralstonia</taxon>
        <taxon>Ralstonia solanacearum species complex</taxon>
    </lineage>
</organism>